<evidence type="ECO:0000250" key="1"/>
<evidence type="ECO:0000250" key="2">
    <source>
        <dbReference type="UniProtKB" id="A0SIF1"/>
    </source>
</evidence>
<evidence type="ECO:0000250" key="3">
    <source>
        <dbReference type="UniProtKB" id="Q9VIQ0"/>
    </source>
</evidence>
<evidence type="ECO:0000255" key="4"/>
<evidence type="ECO:0000256" key="5">
    <source>
        <dbReference type="SAM" id="MobiDB-lite"/>
    </source>
</evidence>
<evidence type="ECO:0000269" key="6">
    <source>
    </source>
</evidence>
<evidence type="ECO:0000305" key="7"/>
<evidence type="ECO:0000312" key="8">
    <source>
        <dbReference type="EMBL" id="ABE72968.1"/>
    </source>
</evidence>
<organism>
    <name type="scientific">Aedes aegypti</name>
    <name type="common">Yellowfever mosquito</name>
    <name type="synonym">Culex aegypti</name>
    <dbReference type="NCBI Taxonomy" id="7159"/>
    <lineage>
        <taxon>Eukaryota</taxon>
        <taxon>Metazoa</taxon>
        <taxon>Ecdysozoa</taxon>
        <taxon>Arthropoda</taxon>
        <taxon>Hexapoda</taxon>
        <taxon>Insecta</taxon>
        <taxon>Pterygota</taxon>
        <taxon>Neoptera</taxon>
        <taxon>Endopterygota</taxon>
        <taxon>Diptera</taxon>
        <taxon>Nematocera</taxon>
        <taxon>Culicoidea</taxon>
        <taxon>Culicidae</taxon>
        <taxon>Culicinae</taxon>
        <taxon>Aedini</taxon>
        <taxon>Aedes</taxon>
        <taxon>Stegomyia</taxon>
    </lineage>
</organism>
<feature type="signal peptide" evidence="4">
    <location>
        <begin position="1"/>
        <end position="22"/>
    </location>
</feature>
<feature type="propeptide" id="PRO_0000284734" evidence="3">
    <location>
        <begin position="23"/>
        <end position="56"/>
    </location>
</feature>
<feature type="peptide" id="PRO_0000284735" description="RLRF peptide 1" evidence="3">
    <location>
        <begin position="59"/>
        <end position="69"/>
    </location>
</feature>
<feature type="peptide" id="PRO_0000284736" description="sNPF-associated peptide" evidence="3">
    <location>
        <begin position="73"/>
        <end position="89"/>
    </location>
</feature>
<feature type="peptide" id="PRO_0000284737" description="RLRF peptide 2" evidence="3">
    <location>
        <begin position="91"/>
        <end position="101"/>
    </location>
</feature>
<feature type="peptide" id="PRO_0000284738" description="sNPF peptide 2" evidence="3">
    <location>
        <begin position="104"/>
        <end position="119"/>
    </location>
</feature>
<feature type="peptide" id="PRO_0000284739" description="RLRW peptide" evidence="2">
    <location>
        <begin position="122"/>
        <end position="129"/>
    </location>
</feature>
<feature type="peptide" id="PRO_0000284740" description="sNPF peptide 3" evidence="2">
    <location>
        <begin position="132"/>
        <end position="145"/>
    </location>
</feature>
<feature type="peptide" id="PRO_0000284741" description="RLRF peptide 3" evidence="2">
    <location>
        <begin position="147"/>
        <end position="157"/>
    </location>
</feature>
<feature type="propeptide" id="PRO_0000284742" evidence="2">
    <location>
        <begin position="160"/>
        <end position="215"/>
    </location>
</feature>
<feature type="region of interest" description="Disordered" evidence="5">
    <location>
        <begin position="173"/>
        <end position="215"/>
    </location>
</feature>
<feature type="modified residue" description="Phenylalanine amide" evidence="1">
    <location>
        <position position="69"/>
    </location>
</feature>
<feature type="modified residue" description="Phenylalanine amide" evidence="1">
    <location>
        <position position="101"/>
    </location>
</feature>
<feature type="modified residue" description="Tryptophan amide" evidence="1">
    <location>
        <position position="129"/>
    </location>
</feature>
<feature type="modified residue" description="Phenylalanine amide" evidence="1">
    <location>
        <position position="157"/>
    </location>
</feature>
<feature type="splice variant" id="VSP_052376" description="In isoform B." evidence="7">
    <original>QVESEENSPSNMDEK</original>
    <variation>SAQCVSSSEAQR</variation>
    <location>
        <begin position="201"/>
        <end position="215"/>
    </location>
</feature>
<feature type="sequence conflict" description="In Ref. 1; ABE72968." evidence="7" ref="1">
    <original>V</original>
    <variation>A</variation>
    <location>
        <position position="14"/>
    </location>
</feature>
<feature type="sequence conflict" description="In Ref. 1; ABE72968." evidence="7" ref="1">
    <original>V</original>
    <variation>M</variation>
    <location>
        <position position="77"/>
    </location>
</feature>
<feature type="sequence conflict" description="In Ref. 1; ABE72968." evidence="7" ref="1">
    <original>P</original>
    <variation>T</variation>
    <location>
        <position position="162"/>
    </location>
</feature>
<name>SNPF_AEDAE</name>
<proteinExistence type="evidence at transcript level"/>
<gene>
    <name evidence="3" type="primary">sNPF</name>
    <name type="ORF">AAEL012542</name>
</gene>
<accession>A0SIX6</accession>
<accession>Q16LS3</accession>
<keyword id="KW-0025">Alternative splicing</keyword>
<keyword id="KW-0027">Amidation</keyword>
<keyword id="KW-0165">Cleavage on pair of basic residues</keyword>
<keyword id="KW-0527">Neuropeptide</keyword>
<keyword id="KW-1185">Reference proteome</keyword>
<keyword id="KW-0964">Secreted</keyword>
<keyword id="KW-0732">Signal</keyword>
<dbReference type="EMBL" id="DQ459411">
    <property type="protein sequence ID" value="ABE72968.1"/>
    <property type="molecule type" value="mRNA"/>
</dbReference>
<dbReference type="EMBL" id="CH477894">
    <property type="protein sequence ID" value="EAT35275.1"/>
    <property type="molecule type" value="Genomic_DNA"/>
</dbReference>
<dbReference type="RefSeq" id="XP_001662646.1">
    <property type="nucleotide sequence ID" value="XM_001662596.1"/>
</dbReference>
<dbReference type="STRING" id="7159.A0SIX6"/>
<dbReference type="PaxDb" id="7159-AAEL012542-PA"/>
<dbReference type="EnsemblMetazoa" id="AAEL019691-RA">
    <molecule id="A0SIX6-1"/>
    <property type="protein sequence ID" value="AAEL019691-PA"/>
    <property type="gene ID" value="AAEL019691"/>
</dbReference>
<dbReference type="EnsemblMetazoa" id="AAEL019691-RB">
    <molecule id="A0SIX6-1"/>
    <property type="protein sequence ID" value="AAEL019691-PB"/>
    <property type="gene ID" value="AAEL019691"/>
</dbReference>
<dbReference type="VEuPathDB" id="VectorBase:AAEL019691"/>
<dbReference type="eggNOG" id="ENOG502SEMZ">
    <property type="taxonomic scope" value="Eukaryota"/>
</dbReference>
<dbReference type="HOGENOM" id="CLU_1171457_0_0_1"/>
<dbReference type="InParanoid" id="A0SIX6"/>
<dbReference type="OMA" id="GNLVNQF"/>
<dbReference type="OrthoDB" id="6364308at2759"/>
<dbReference type="Proteomes" id="UP000008820">
    <property type="component" value="Chromosome 2"/>
</dbReference>
<dbReference type="Proteomes" id="UP000682892">
    <property type="component" value="Unassembled WGS sequence"/>
</dbReference>
<dbReference type="GO" id="GO:0005576">
    <property type="term" value="C:extracellular region"/>
    <property type="evidence" value="ECO:0000250"/>
    <property type="project" value="UniProtKB"/>
</dbReference>
<dbReference type="GO" id="GO:0005184">
    <property type="term" value="F:neuropeptide hormone activity"/>
    <property type="evidence" value="ECO:0000250"/>
    <property type="project" value="UniProtKB"/>
</dbReference>
<dbReference type="GO" id="GO:0007218">
    <property type="term" value="P:neuropeptide signaling pathway"/>
    <property type="evidence" value="ECO:0000250"/>
    <property type="project" value="UniProtKB"/>
</dbReference>
<dbReference type="GO" id="GO:0040014">
    <property type="term" value="P:regulation of multicellular organism growth"/>
    <property type="evidence" value="ECO:0000250"/>
    <property type="project" value="UniProtKB"/>
</dbReference>
<dbReference type="GO" id="GO:0032095">
    <property type="term" value="P:regulation of response to food"/>
    <property type="evidence" value="ECO:0000250"/>
    <property type="project" value="UniProtKB"/>
</dbReference>
<reference evidence="7 8" key="1">
    <citation type="journal article" date="2007" name="Peptides">
        <title>Characterization and expression of the short neuropeptide F receptor in the African malaria mosquito, Anopheles gambiae.</title>
        <authorList>
            <person name="Garczynski S.F."/>
            <person name="Crim J.W."/>
            <person name="Brown M.R."/>
        </authorList>
    </citation>
    <scope>NUCLEOTIDE SEQUENCE [MRNA] (ISOFORM A)</scope>
    <source>
        <tissue evidence="8">Head</tissue>
    </source>
</reference>
<reference key="2">
    <citation type="journal article" date="2007" name="Science">
        <title>Genome sequence of Aedes aegypti, a major arbovirus vector.</title>
        <authorList>
            <person name="Nene V."/>
            <person name="Wortman J.R."/>
            <person name="Lawson D."/>
            <person name="Haas B.J."/>
            <person name="Kodira C.D."/>
            <person name="Tu Z.J."/>
            <person name="Loftus B.J."/>
            <person name="Xi Z."/>
            <person name="Megy K."/>
            <person name="Grabherr M."/>
            <person name="Ren Q."/>
            <person name="Zdobnov E.M."/>
            <person name="Lobo N.F."/>
            <person name="Campbell K.S."/>
            <person name="Brown S.E."/>
            <person name="Bonaldo M.F."/>
            <person name="Zhu J."/>
            <person name="Sinkins S.P."/>
            <person name="Hogenkamp D.G."/>
            <person name="Amedeo P."/>
            <person name="Arensburger P."/>
            <person name="Atkinson P.W."/>
            <person name="Bidwell S.L."/>
            <person name="Biedler J."/>
            <person name="Birney E."/>
            <person name="Bruggner R.V."/>
            <person name="Costas J."/>
            <person name="Coy M.R."/>
            <person name="Crabtree J."/>
            <person name="Crawford M."/>
            <person name="DeBruyn B."/>
            <person name="DeCaprio D."/>
            <person name="Eiglmeier K."/>
            <person name="Eisenstadt E."/>
            <person name="El-Dorry H."/>
            <person name="Gelbart W.M."/>
            <person name="Gomes S.L."/>
            <person name="Hammond M."/>
            <person name="Hannick L.I."/>
            <person name="Hogan J.R."/>
            <person name="Holmes M.H."/>
            <person name="Jaffe D."/>
            <person name="Johnston S.J."/>
            <person name="Kennedy R.C."/>
            <person name="Koo H."/>
            <person name="Kravitz S."/>
            <person name="Kriventseva E.V."/>
            <person name="Kulp D."/>
            <person name="Labutti K."/>
            <person name="Lee E."/>
            <person name="Li S."/>
            <person name="Lovin D.D."/>
            <person name="Mao C."/>
            <person name="Mauceli E."/>
            <person name="Menck C.F."/>
            <person name="Miller J.R."/>
            <person name="Montgomery P."/>
            <person name="Mori A."/>
            <person name="Nascimento A.L."/>
            <person name="Naveira H.F."/>
            <person name="Nusbaum C."/>
            <person name="O'Leary S.B."/>
            <person name="Orvis J."/>
            <person name="Pertea M."/>
            <person name="Quesneville H."/>
            <person name="Reidenbach K.R."/>
            <person name="Rogers Y.-H.C."/>
            <person name="Roth C.W."/>
            <person name="Schneider J.R."/>
            <person name="Schatz M."/>
            <person name="Shumway M."/>
            <person name="Stanke M."/>
            <person name="Stinson E.O."/>
            <person name="Tubio J.M.C."/>
            <person name="Vanzee J.P."/>
            <person name="Verjovski-Almeida S."/>
            <person name="Werner D."/>
            <person name="White O.R."/>
            <person name="Wyder S."/>
            <person name="Zeng Q."/>
            <person name="Zhao Q."/>
            <person name="Zhao Y."/>
            <person name="Hill C.A."/>
            <person name="Raikhel A.S."/>
            <person name="Soares M.B."/>
            <person name="Knudson D.L."/>
            <person name="Lee N.H."/>
            <person name="Galagan J."/>
            <person name="Salzberg S.L."/>
            <person name="Paulsen I.T."/>
            <person name="Dimopoulos G."/>
            <person name="Collins F.H."/>
            <person name="Bruce B."/>
            <person name="Fraser-Liggett C.M."/>
            <person name="Severson D.W."/>
        </authorList>
    </citation>
    <scope>NUCLEOTIDE SEQUENCE [LARGE SCALE GENOMIC DNA]</scope>
    <source>
        <strain>LVPib12</strain>
    </source>
</reference>
<protein>
    <recommendedName>
        <fullName>Short neuropeptide F</fullName>
    </recommendedName>
    <component>
        <recommendedName>
            <fullName>sNPF-associated peptide</fullName>
        </recommendedName>
    </component>
    <component>
        <recommendedName>
            <fullName>sNPF peptide 2</fullName>
        </recommendedName>
    </component>
    <component>
        <recommendedName>
            <fullName>sNPF peptide 3</fullName>
        </recommendedName>
    </component>
    <component>
        <recommendedName>
            <fullName>RLRF peptide 1</fullName>
        </recommendedName>
    </component>
    <component>
        <recommendedName>
            <fullName>RLRF peptide 2</fullName>
        </recommendedName>
    </component>
    <component>
        <recommendedName>
            <fullName>RLRF peptide 3</fullName>
        </recommendedName>
    </component>
    <component>
        <recommendedName>
            <fullName>RLRW peptide</fullName>
        </recommendedName>
    </component>
</protein>
<comment type="function">
    <text evidence="3">Plays a role in controlling food intake and regulating body size.</text>
</comment>
<comment type="subcellular location">
    <subcellularLocation>
        <location evidence="1">Secreted</location>
    </subcellularLocation>
</comment>
<comment type="alternative products">
    <event type="alternative splicing"/>
    <isoform>
        <id>A0SIX6-1</id>
        <name evidence="6">A</name>
        <sequence type="displayed"/>
    </isoform>
    <isoform>
        <id>A0SIX6-2</id>
        <name>B</name>
        <sequence type="described" ref="VSP_052376"/>
    </isoform>
</comment>
<comment type="similarity">
    <text evidence="4">Belongs to the NPY family.</text>
</comment>
<sequence length="215" mass="24637">MCRINFTTLSLILVLWSGSLMSEPSQNADGSIKGLYEYLLQREYAAPVSYADHQIKRKAVRSPSLRLRFGRRSDPSVPVEPEDDDMVDQRSIRAPQLRLRFGRTDPLWSSFNENALLEEKRAPSQRLRWGRSGGGMFSTNDVMQQKAIRAPQLRLRFGRSDPSWAMFNEHQLDEQQFADATRQPSKTLRGDEPTSIESTEQVESEENSPSNMDEK</sequence>